<proteinExistence type="inferred from homology"/>
<evidence type="ECO:0000255" key="1">
    <source>
        <dbReference type="HAMAP-Rule" id="MF_03113"/>
    </source>
</evidence>
<gene>
    <name evidence="1" type="primary">GET1</name>
    <name type="ORF">HCAG_08959</name>
</gene>
<keyword id="KW-0175">Coiled coil</keyword>
<keyword id="KW-0256">Endoplasmic reticulum</keyword>
<keyword id="KW-0472">Membrane</keyword>
<keyword id="KW-1185">Reference proteome</keyword>
<keyword id="KW-0812">Transmembrane</keyword>
<keyword id="KW-1133">Transmembrane helix</keyword>
<keyword id="KW-0813">Transport</keyword>
<comment type="function">
    <text evidence="1">Required for the post-translational delivery of tail-anchored (TA) proteins to the endoplasmic reticulum. Acts as a membrane receptor for soluble GET3, which recognizes and selectively binds the transmembrane domain of TA proteins in the cytosol.</text>
</comment>
<comment type="subunit">
    <text evidence="1">Interacts with GET3.</text>
</comment>
<comment type="subcellular location">
    <subcellularLocation>
        <location evidence="1">Endoplasmic reticulum membrane</location>
        <topology evidence="1">Multi-pass membrane protein</topology>
    </subcellularLocation>
</comment>
<comment type="similarity">
    <text evidence="1">Belongs to the WRB/GET1 family.</text>
</comment>
<accession>A6RH42</accession>
<reference key="1">
    <citation type="journal article" date="2009" name="Genome Res.">
        <title>Comparative genomic analyses of the human fungal pathogens Coccidioides and their relatives.</title>
        <authorList>
            <person name="Sharpton T.J."/>
            <person name="Stajich J.E."/>
            <person name="Rounsley S.D."/>
            <person name="Gardner M.J."/>
            <person name="Wortman J.R."/>
            <person name="Jordar V.S."/>
            <person name="Maiti R."/>
            <person name="Kodira C.D."/>
            <person name="Neafsey D.E."/>
            <person name="Zeng Q."/>
            <person name="Hung C.-Y."/>
            <person name="McMahan C."/>
            <person name="Muszewska A."/>
            <person name="Grynberg M."/>
            <person name="Mandel M.A."/>
            <person name="Kellner E.M."/>
            <person name="Barker B.M."/>
            <person name="Galgiani J.N."/>
            <person name="Orbach M.J."/>
            <person name="Kirkland T.N."/>
            <person name="Cole G.T."/>
            <person name="Henn M.R."/>
            <person name="Birren B.W."/>
            <person name="Taylor J.W."/>
        </authorList>
    </citation>
    <scope>NUCLEOTIDE SEQUENCE [LARGE SCALE GENOMIC DNA]</scope>
    <source>
        <strain>NAm1 / WU24</strain>
    </source>
</reference>
<protein>
    <recommendedName>
        <fullName evidence="1">Protein GET1</fullName>
    </recommendedName>
    <alternativeName>
        <fullName evidence="1">Guided entry of tail-anchored proteins 1</fullName>
    </alternativeName>
</protein>
<name>GET1_AJECN</name>
<dbReference type="EMBL" id="CH476668">
    <property type="protein sequence ID" value="EDN05316.1"/>
    <property type="molecule type" value="Genomic_DNA"/>
</dbReference>
<dbReference type="SMR" id="A6RH42"/>
<dbReference type="STRING" id="339724.A6RH42"/>
<dbReference type="KEGG" id="aje:HCAG_08959"/>
<dbReference type="VEuPathDB" id="FungiDB:HCAG_08959"/>
<dbReference type="HOGENOM" id="CLU_089418_1_0_1"/>
<dbReference type="OMA" id="AEWIISF"/>
<dbReference type="OrthoDB" id="1588at299071"/>
<dbReference type="Proteomes" id="UP000009297">
    <property type="component" value="Unassembled WGS sequence"/>
</dbReference>
<dbReference type="GO" id="GO:0005789">
    <property type="term" value="C:endoplasmic reticulum membrane"/>
    <property type="evidence" value="ECO:0007669"/>
    <property type="project" value="UniProtKB-SubCell"/>
</dbReference>
<dbReference type="GO" id="GO:0043529">
    <property type="term" value="C:GET complex"/>
    <property type="evidence" value="ECO:0007669"/>
    <property type="project" value="InterPro"/>
</dbReference>
<dbReference type="GO" id="GO:0043495">
    <property type="term" value="F:protein-membrane adaptor activity"/>
    <property type="evidence" value="ECO:0007669"/>
    <property type="project" value="TreeGrafter"/>
</dbReference>
<dbReference type="GO" id="GO:0071816">
    <property type="term" value="P:tail-anchored membrane protein insertion into ER membrane"/>
    <property type="evidence" value="ECO:0007669"/>
    <property type="project" value="InterPro"/>
</dbReference>
<dbReference type="FunFam" id="1.10.287.660:FF:000006">
    <property type="entry name" value="Protein GET1"/>
    <property type="match status" value="1"/>
</dbReference>
<dbReference type="Gene3D" id="1.10.287.660">
    <property type="entry name" value="Helix hairpin bin"/>
    <property type="match status" value="1"/>
</dbReference>
<dbReference type="HAMAP" id="MF_03113">
    <property type="entry name" value="Get1"/>
    <property type="match status" value="1"/>
</dbReference>
<dbReference type="InterPro" id="IPR028945">
    <property type="entry name" value="Get1"/>
</dbReference>
<dbReference type="InterPro" id="IPR027538">
    <property type="entry name" value="Get1_fungi"/>
</dbReference>
<dbReference type="InterPro" id="IPR029012">
    <property type="entry name" value="Helix_hairpin_bin_sf"/>
</dbReference>
<dbReference type="PANTHER" id="PTHR42650:SF1">
    <property type="entry name" value="GUIDED ENTRY OF TAIL-ANCHORED PROTEINS FACTOR 1"/>
    <property type="match status" value="1"/>
</dbReference>
<dbReference type="PANTHER" id="PTHR42650">
    <property type="entry name" value="TAIL-ANCHORED PROTEIN INSERTION RECEPTOR WRB"/>
    <property type="match status" value="1"/>
</dbReference>
<dbReference type="Pfam" id="PF04420">
    <property type="entry name" value="CHD5"/>
    <property type="match status" value="1"/>
</dbReference>
<sequence length="206" mass="23288">MPSLLITVLFLNVIIYVINTVGAATVDGLLWLLYIKLPTGTSQIAREQRHMKREVVQLKHEMSSTSSQDEFAKWAKLRRRHDKAMEAYEAKNNELTQSKSTFDMTIKIARWAATSGLMLFLQFWYSKTPIFTLPPGWIPWQVQWVLSFPRAPMGTVSIQIWGGACATVVALVGDAMRASLAYVSKPKIDRIKLGATMEGKEGKKRQ</sequence>
<feature type="chain" id="PRO_0000388571" description="Protein GET1">
    <location>
        <begin position="1"/>
        <end position="206"/>
    </location>
</feature>
<feature type="topological domain" description="Lumenal" evidence="1">
    <location>
        <begin position="1"/>
        <end position="4"/>
    </location>
</feature>
<feature type="transmembrane region" description="Helical" evidence="1">
    <location>
        <begin position="5"/>
        <end position="24"/>
    </location>
</feature>
<feature type="topological domain" description="Cytoplasmic" evidence="1">
    <location>
        <begin position="25"/>
        <end position="110"/>
    </location>
</feature>
<feature type="transmembrane region" description="Helical" evidence="1">
    <location>
        <begin position="111"/>
        <end position="131"/>
    </location>
</feature>
<feature type="topological domain" description="Lumenal" evidence="1">
    <location>
        <begin position="132"/>
        <end position="155"/>
    </location>
</feature>
<feature type="transmembrane region" description="Helical" evidence="1">
    <location>
        <begin position="156"/>
        <end position="172"/>
    </location>
</feature>
<feature type="topological domain" description="Cytoplasmic" evidence="1">
    <location>
        <begin position="173"/>
        <end position="206"/>
    </location>
</feature>
<feature type="coiled-coil region" evidence="1">
    <location>
        <begin position="75"/>
        <end position="100"/>
    </location>
</feature>
<organism>
    <name type="scientific">Ajellomyces capsulatus (strain NAm1 / WU24)</name>
    <name type="common">Darling's disease fungus</name>
    <name type="synonym">Histoplasma capsulatum</name>
    <dbReference type="NCBI Taxonomy" id="2059318"/>
    <lineage>
        <taxon>Eukaryota</taxon>
        <taxon>Fungi</taxon>
        <taxon>Dikarya</taxon>
        <taxon>Ascomycota</taxon>
        <taxon>Pezizomycotina</taxon>
        <taxon>Eurotiomycetes</taxon>
        <taxon>Eurotiomycetidae</taxon>
        <taxon>Onygenales</taxon>
        <taxon>Ajellomycetaceae</taxon>
        <taxon>Histoplasma</taxon>
    </lineage>
</organism>